<sequence>MSQQTTIRKLAELVNTPVDKLLVQLAEAGMKFSGPDQVVTSTEKMKLLGFLRRTHGKAETPAEAASEAAKKITLNRRKLQEVTVSAGRTKTTVNVEVRQKRTYVKSENEGSGRATPMTPDEERADILAKLAASRQRNLDEQQRLAESDRVRDEEIQRKRDEEQAAKDRAEAERKAAEEAAAAASAPAPAPVAAAPTPSAAAPAARAPSSPSSAPRPSRPGGASPASRPSTPARPDDRNNAAKHKTRGSHVMVAGVEDDDATKRFAGQLHLSAADRARRSNVRGKPTGRPGSSSSRRGNDNGRGSNQANSGPHGFERPTAPVVREVAIGETITVADLAQKLALKGGDVVKALFKMGVMATITQSIDHDTAALVTEELGHKAVRADNADFEDALLAHAEDAQGDTTTRPPVVTIMGHVDHGKTSLLDYIRRTKIASGEAGGITQHIGAYHVETDRGVISFLDTPGHAAFTSMRARGAKITDIVVLVVAADDGVMPQTKEAVAHAKAAGVPLIVAVNKIDKAGADPLRVKNELLAENVVAEDFGGDTQFIEVSAKVGTGVDTLLDAISLQAEVLELKAVAEGRASGTVIESSLDKGRGPVATVLVQQGALKRGDYLVCGIQYGRVRALFDETGHQPGSAGPSIPVQVLGLSGVPEAGDDFVVVDDERLAKDVAQQRETKRRESRLVASATNRMEDILAQMGKGEGQQVLNLVIKADVQGSVEALKQSLVALSNEDIRINVIHSGVGGITESDANSAAASKATIIGFNVRADASARKIVESNGVDLRYFSIIYDVIDQVKQVASGLLGVEIREEIMGIAQVRDVFRSSKFGAVAGCMIIEGVVKRSKPIRVLRDSVVVFEGELESLRRFKENVDEVRNGNECGIGVKAYNDVKAGDQIECFERIEVARTL</sequence>
<reference key="1">
    <citation type="journal article" date="2005" name="Nucleic Acids Res.">
        <title>The genome sequence of Xanthomonas oryzae pathovar oryzae KACC10331, the bacterial blight pathogen of rice.</title>
        <authorList>
            <person name="Lee B.-M."/>
            <person name="Park Y.-J."/>
            <person name="Park D.-S."/>
            <person name="Kang H.-W."/>
            <person name="Kim J.-G."/>
            <person name="Song E.-S."/>
            <person name="Park I.-C."/>
            <person name="Yoon U.-H."/>
            <person name="Hahn J.-H."/>
            <person name="Koo B.-S."/>
            <person name="Lee G.-B."/>
            <person name="Kim H."/>
            <person name="Park H.-S."/>
            <person name="Yoon K.-O."/>
            <person name="Kim J.-H."/>
            <person name="Jung C.-H."/>
            <person name="Koh N.-H."/>
            <person name="Seo J.-S."/>
            <person name="Go S.-J."/>
        </authorList>
    </citation>
    <scope>NUCLEOTIDE SEQUENCE [LARGE SCALE GENOMIC DNA]</scope>
    <source>
        <strain>KACC10331 / KXO85</strain>
    </source>
</reference>
<gene>
    <name evidence="2" type="primary">infB</name>
    <name type="ordered locus">XOO3218</name>
</gene>
<organism>
    <name type="scientific">Xanthomonas oryzae pv. oryzae (strain KACC10331 / KXO85)</name>
    <dbReference type="NCBI Taxonomy" id="291331"/>
    <lineage>
        <taxon>Bacteria</taxon>
        <taxon>Pseudomonadati</taxon>
        <taxon>Pseudomonadota</taxon>
        <taxon>Gammaproteobacteria</taxon>
        <taxon>Lysobacterales</taxon>
        <taxon>Lysobacteraceae</taxon>
        <taxon>Xanthomonas</taxon>
    </lineage>
</organism>
<accession>Q5GXU9</accession>
<name>IF2_XANOR</name>
<proteinExistence type="inferred from homology"/>
<feature type="chain" id="PRO_0000228263" description="Translation initiation factor IF-2">
    <location>
        <begin position="1"/>
        <end position="906"/>
    </location>
</feature>
<feature type="domain" description="tr-type G">
    <location>
        <begin position="405"/>
        <end position="574"/>
    </location>
</feature>
<feature type="region of interest" description="Disordered" evidence="3">
    <location>
        <begin position="134"/>
        <end position="250"/>
    </location>
</feature>
<feature type="region of interest" description="Disordered" evidence="3">
    <location>
        <begin position="269"/>
        <end position="317"/>
    </location>
</feature>
<feature type="region of interest" description="G1" evidence="1">
    <location>
        <begin position="414"/>
        <end position="421"/>
    </location>
</feature>
<feature type="region of interest" description="G2" evidence="1">
    <location>
        <begin position="439"/>
        <end position="443"/>
    </location>
</feature>
<feature type="region of interest" description="G3" evidence="1">
    <location>
        <begin position="460"/>
        <end position="463"/>
    </location>
</feature>
<feature type="region of interest" description="G4" evidence="1">
    <location>
        <begin position="514"/>
        <end position="517"/>
    </location>
</feature>
<feature type="region of interest" description="G5" evidence="1">
    <location>
        <begin position="550"/>
        <end position="552"/>
    </location>
</feature>
<feature type="compositionally biased region" description="Basic and acidic residues" evidence="3">
    <location>
        <begin position="136"/>
        <end position="177"/>
    </location>
</feature>
<feature type="compositionally biased region" description="Low complexity" evidence="3">
    <location>
        <begin position="178"/>
        <end position="232"/>
    </location>
</feature>
<feature type="compositionally biased region" description="Low complexity" evidence="3">
    <location>
        <begin position="287"/>
        <end position="305"/>
    </location>
</feature>
<feature type="binding site" evidence="2">
    <location>
        <begin position="414"/>
        <end position="421"/>
    </location>
    <ligand>
        <name>GTP</name>
        <dbReference type="ChEBI" id="CHEBI:37565"/>
    </ligand>
</feature>
<feature type="binding site" evidence="2">
    <location>
        <begin position="460"/>
        <end position="464"/>
    </location>
    <ligand>
        <name>GTP</name>
        <dbReference type="ChEBI" id="CHEBI:37565"/>
    </ligand>
</feature>
<feature type="binding site" evidence="2">
    <location>
        <begin position="514"/>
        <end position="517"/>
    </location>
    <ligand>
        <name>GTP</name>
        <dbReference type="ChEBI" id="CHEBI:37565"/>
    </ligand>
</feature>
<dbReference type="EMBL" id="AE013598">
    <property type="protein sequence ID" value="AAW76472.1"/>
    <property type="status" value="ALT_INIT"/>
    <property type="molecule type" value="Genomic_DNA"/>
</dbReference>
<dbReference type="SMR" id="Q5GXU9"/>
<dbReference type="STRING" id="291331.XOO3218"/>
<dbReference type="KEGG" id="xoo:XOO3218"/>
<dbReference type="PATRIC" id="fig|291331.8.peg.3566"/>
<dbReference type="HOGENOM" id="CLU_006301_10_2_6"/>
<dbReference type="Proteomes" id="UP000006735">
    <property type="component" value="Chromosome"/>
</dbReference>
<dbReference type="GO" id="GO:0005829">
    <property type="term" value="C:cytosol"/>
    <property type="evidence" value="ECO:0007669"/>
    <property type="project" value="TreeGrafter"/>
</dbReference>
<dbReference type="GO" id="GO:0005525">
    <property type="term" value="F:GTP binding"/>
    <property type="evidence" value="ECO:0007669"/>
    <property type="project" value="UniProtKB-KW"/>
</dbReference>
<dbReference type="GO" id="GO:0003924">
    <property type="term" value="F:GTPase activity"/>
    <property type="evidence" value="ECO:0007669"/>
    <property type="project" value="UniProtKB-UniRule"/>
</dbReference>
<dbReference type="GO" id="GO:0097216">
    <property type="term" value="F:guanosine tetraphosphate binding"/>
    <property type="evidence" value="ECO:0007669"/>
    <property type="project" value="UniProtKB-ARBA"/>
</dbReference>
<dbReference type="GO" id="GO:0003743">
    <property type="term" value="F:translation initiation factor activity"/>
    <property type="evidence" value="ECO:0007669"/>
    <property type="project" value="UniProtKB-UniRule"/>
</dbReference>
<dbReference type="CDD" id="cd01887">
    <property type="entry name" value="IF2_eIF5B"/>
    <property type="match status" value="1"/>
</dbReference>
<dbReference type="CDD" id="cd03702">
    <property type="entry name" value="IF2_mtIF2_II"/>
    <property type="match status" value="1"/>
</dbReference>
<dbReference type="CDD" id="cd03692">
    <property type="entry name" value="mtIF2_IVc"/>
    <property type="match status" value="1"/>
</dbReference>
<dbReference type="FunFam" id="2.40.30.10:FF:000008">
    <property type="entry name" value="Translation initiation factor IF-2"/>
    <property type="match status" value="1"/>
</dbReference>
<dbReference type="FunFam" id="2.40.30.10:FF:000054">
    <property type="entry name" value="Translation initiation factor IF-2"/>
    <property type="match status" value="1"/>
</dbReference>
<dbReference type="FunFam" id="3.40.50.10050:FF:000001">
    <property type="entry name" value="Translation initiation factor IF-2"/>
    <property type="match status" value="1"/>
</dbReference>
<dbReference type="FunFam" id="3.40.50.300:FF:000019">
    <property type="entry name" value="Translation initiation factor IF-2"/>
    <property type="match status" value="1"/>
</dbReference>
<dbReference type="Gene3D" id="3.40.50.300">
    <property type="entry name" value="P-loop containing nucleotide triphosphate hydrolases"/>
    <property type="match status" value="1"/>
</dbReference>
<dbReference type="Gene3D" id="3.30.56.50">
    <property type="entry name" value="Putative DNA-binding domain, N-terminal subdomain of bacterial translation initiation factor IF2"/>
    <property type="match status" value="1"/>
</dbReference>
<dbReference type="Gene3D" id="2.40.30.10">
    <property type="entry name" value="Translation factors"/>
    <property type="match status" value="2"/>
</dbReference>
<dbReference type="Gene3D" id="3.40.50.10050">
    <property type="entry name" value="Translation initiation factor IF- 2, domain 3"/>
    <property type="match status" value="1"/>
</dbReference>
<dbReference type="HAMAP" id="MF_00100_B">
    <property type="entry name" value="IF_2_B"/>
    <property type="match status" value="1"/>
</dbReference>
<dbReference type="InterPro" id="IPR009061">
    <property type="entry name" value="DNA-bd_dom_put_sf"/>
</dbReference>
<dbReference type="InterPro" id="IPR053905">
    <property type="entry name" value="EF-G-like_DII"/>
</dbReference>
<dbReference type="InterPro" id="IPR004161">
    <property type="entry name" value="EFTu-like_2"/>
</dbReference>
<dbReference type="InterPro" id="IPR013575">
    <property type="entry name" value="IF2_assoc_dom_bac"/>
</dbReference>
<dbReference type="InterPro" id="IPR044145">
    <property type="entry name" value="IF2_II"/>
</dbReference>
<dbReference type="InterPro" id="IPR006847">
    <property type="entry name" value="IF2_N"/>
</dbReference>
<dbReference type="InterPro" id="IPR027417">
    <property type="entry name" value="P-loop_NTPase"/>
</dbReference>
<dbReference type="InterPro" id="IPR005225">
    <property type="entry name" value="Small_GTP-bd"/>
</dbReference>
<dbReference type="InterPro" id="IPR000795">
    <property type="entry name" value="T_Tr_GTP-bd_dom"/>
</dbReference>
<dbReference type="InterPro" id="IPR000178">
    <property type="entry name" value="TF_IF2_bacterial-like"/>
</dbReference>
<dbReference type="InterPro" id="IPR015760">
    <property type="entry name" value="TIF_IF2"/>
</dbReference>
<dbReference type="InterPro" id="IPR023115">
    <property type="entry name" value="TIF_IF2_dom3"/>
</dbReference>
<dbReference type="InterPro" id="IPR036925">
    <property type="entry name" value="TIF_IF2_dom3_sf"/>
</dbReference>
<dbReference type="InterPro" id="IPR009000">
    <property type="entry name" value="Transl_B-barrel_sf"/>
</dbReference>
<dbReference type="NCBIfam" id="TIGR00487">
    <property type="entry name" value="IF-2"/>
    <property type="match status" value="1"/>
</dbReference>
<dbReference type="NCBIfam" id="TIGR00231">
    <property type="entry name" value="small_GTP"/>
    <property type="match status" value="1"/>
</dbReference>
<dbReference type="PANTHER" id="PTHR43381:SF5">
    <property type="entry name" value="TR-TYPE G DOMAIN-CONTAINING PROTEIN"/>
    <property type="match status" value="1"/>
</dbReference>
<dbReference type="PANTHER" id="PTHR43381">
    <property type="entry name" value="TRANSLATION INITIATION FACTOR IF-2-RELATED"/>
    <property type="match status" value="1"/>
</dbReference>
<dbReference type="Pfam" id="PF22042">
    <property type="entry name" value="EF-G_D2"/>
    <property type="match status" value="1"/>
</dbReference>
<dbReference type="Pfam" id="PF00009">
    <property type="entry name" value="GTP_EFTU"/>
    <property type="match status" value="1"/>
</dbReference>
<dbReference type="Pfam" id="PF03144">
    <property type="entry name" value="GTP_EFTU_D2"/>
    <property type="match status" value="1"/>
</dbReference>
<dbReference type="Pfam" id="PF11987">
    <property type="entry name" value="IF-2"/>
    <property type="match status" value="1"/>
</dbReference>
<dbReference type="Pfam" id="PF08364">
    <property type="entry name" value="IF2_assoc"/>
    <property type="match status" value="1"/>
</dbReference>
<dbReference type="Pfam" id="PF04760">
    <property type="entry name" value="IF2_N"/>
    <property type="match status" value="1"/>
</dbReference>
<dbReference type="SUPFAM" id="SSF52156">
    <property type="entry name" value="Initiation factor IF2/eIF5b, domain 3"/>
    <property type="match status" value="1"/>
</dbReference>
<dbReference type="SUPFAM" id="SSF52540">
    <property type="entry name" value="P-loop containing nucleoside triphosphate hydrolases"/>
    <property type="match status" value="1"/>
</dbReference>
<dbReference type="SUPFAM" id="SSF46955">
    <property type="entry name" value="Putative DNA-binding domain"/>
    <property type="match status" value="1"/>
</dbReference>
<dbReference type="SUPFAM" id="SSF50447">
    <property type="entry name" value="Translation proteins"/>
    <property type="match status" value="2"/>
</dbReference>
<dbReference type="PROSITE" id="PS51722">
    <property type="entry name" value="G_TR_2"/>
    <property type="match status" value="1"/>
</dbReference>
<dbReference type="PROSITE" id="PS01176">
    <property type="entry name" value="IF2"/>
    <property type="match status" value="1"/>
</dbReference>
<keyword id="KW-0963">Cytoplasm</keyword>
<keyword id="KW-0342">GTP-binding</keyword>
<keyword id="KW-0396">Initiation factor</keyword>
<keyword id="KW-0547">Nucleotide-binding</keyword>
<keyword id="KW-0648">Protein biosynthesis</keyword>
<keyword id="KW-1185">Reference proteome</keyword>
<comment type="function">
    <text evidence="2">One of the essential components for the initiation of protein synthesis. Protects formylmethionyl-tRNA from spontaneous hydrolysis and promotes its binding to the 30S ribosomal subunits. Also involved in the hydrolysis of GTP during the formation of the 70S ribosomal complex.</text>
</comment>
<comment type="subcellular location">
    <subcellularLocation>
        <location evidence="2">Cytoplasm</location>
    </subcellularLocation>
</comment>
<comment type="similarity">
    <text evidence="2">Belongs to the TRAFAC class translation factor GTPase superfamily. Classic translation factor GTPase family. IF-2 subfamily.</text>
</comment>
<comment type="sequence caution" evidence="4">
    <conflict type="erroneous initiation">
        <sequence resource="EMBL-CDS" id="AAW76472"/>
    </conflict>
</comment>
<evidence type="ECO:0000250" key="1"/>
<evidence type="ECO:0000255" key="2">
    <source>
        <dbReference type="HAMAP-Rule" id="MF_00100"/>
    </source>
</evidence>
<evidence type="ECO:0000256" key="3">
    <source>
        <dbReference type="SAM" id="MobiDB-lite"/>
    </source>
</evidence>
<evidence type="ECO:0000305" key="4"/>
<protein>
    <recommendedName>
        <fullName evidence="2">Translation initiation factor IF-2</fullName>
    </recommendedName>
</protein>